<proteinExistence type="inferred from homology"/>
<feature type="chain" id="PRO_1000047596" description="Glutamate racemase">
    <location>
        <begin position="1"/>
        <end position="265"/>
    </location>
</feature>
<feature type="active site" description="Proton donor/acceptor" evidence="1">
    <location>
        <position position="75"/>
    </location>
</feature>
<feature type="active site" description="Proton donor/acceptor" evidence="1">
    <location>
        <position position="186"/>
    </location>
</feature>
<feature type="binding site" evidence="1">
    <location>
        <begin position="12"/>
        <end position="13"/>
    </location>
    <ligand>
        <name>substrate</name>
    </ligand>
</feature>
<feature type="binding site" evidence="1">
    <location>
        <begin position="44"/>
        <end position="45"/>
    </location>
    <ligand>
        <name>substrate</name>
    </ligand>
</feature>
<feature type="binding site" evidence="1">
    <location>
        <begin position="76"/>
        <end position="77"/>
    </location>
    <ligand>
        <name>substrate</name>
    </ligand>
</feature>
<feature type="binding site" evidence="1">
    <location>
        <begin position="187"/>
        <end position="188"/>
    </location>
    <ligand>
        <name>substrate</name>
    </ligand>
</feature>
<dbReference type="EC" id="5.1.1.3" evidence="1"/>
<dbReference type="EMBL" id="CP000744">
    <property type="protein sequence ID" value="ABR85357.1"/>
    <property type="molecule type" value="Genomic_DNA"/>
</dbReference>
<dbReference type="RefSeq" id="WP_003151673.1">
    <property type="nucleotide sequence ID" value="NC_009656.1"/>
</dbReference>
<dbReference type="SMR" id="A6VC58"/>
<dbReference type="GeneID" id="77223166"/>
<dbReference type="KEGG" id="pap:PSPA7_5311"/>
<dbReference type="HOGENOM" id="CLU_052344_1_0_6"/>
<dbReference type="UniPathway" id="UPA00219"/>
<dbReference type="Proteomes" id="UP000001582">
    <property type="component" value="Chromosome"/>
</dbReference>
<dbReference type="GO" id="GO:0008881">
    <property type="term" value="F:glutamate racemase activity"/>
    <property type="evidence" value="ECO:0007669"/>
    <property type="project" value="UniProtKB-UniRule"/>
</dbReference>
<dbReference type="GO" id="GO:0071555">
    <property type="term" value="P:cell wall organization"/>
    <property type="evidence" value="ECO:0007669"/>
    <property type="project" value="UniProtKB-KW"/>
</dbReference>
<dbReference type="GO" id="GO:0009252">
    <property type="term" value="P:peptidoglycan biosynthetic process"/>
    <property type="evidence" value="ECO:0007669"/>
    <property type="project" value="UniProtKB-UniRule"/>
</dbReference>
<dbReference type="GO" id="GO:0008360">
    <property type="term" value="P:regulation of cell shape"/>
    <property type="evidence" value="ECO:0007669"/>
    <property type="project" value="UniProtKB-KW"/>
</dbReference>
<dbReference type="FunFam" id="3.40.50.1860:FF:000001">
    <property type="entry name" value="Glutamate racemase"/>
    <property type="match status" value="1"/>
</dbReference>
<dbReference type="Gene3D" id="3.40.50.1860">
    <property type="match status" value="2"/>
</dbReference>
<dbReference type="HAMAP" id="MF_00258">
    <property type="entry name" value="Glu_racemase"/>
    <property type="match status" value="1"/>
</dbReference>
<dbReference type="InterPro" id="IPR015942">
    <property type="entry name" value="Asp/Glu/hydantoin_racemase"/>
</dbReference>
<dbReference type="InterPro" id="IPR001920">
    <property type="entry name" value="Asp/Glu_race"/>
</dbReference>
<dbReference type="InterPro" id="IPR018187">
    <property type="entry name" value="Asp/Glu_racemase_AS_1"/>
</dbReference>
<dbReference type="InterPro" id="IPR033134">
    <property type="entry name" value="Asp/Glu_racemase_AS_2"/>
</dbReference>
<dbReference type="InterPro" id="IPR004391">
    <property type="entry name" value="Glu_race"/>
</dbReference>
<dbReference type="NCBIfam" id="TIGR00067">
    <property type="entry name" value="glut_race"/>
    <property type="match status" value="1"/>
</dbReference>
<dbReference type="PANTHER" id="PTHR21198">
    <property type="entry name" value="GLUTAMATE RACEMASE"/>
    <property type="match status" value="1"/>
</dbReference>
<dbReference type="PANTHER" id="PTHR21198:SF2">
    <property type="entry name" value="GLUTAMATE RACEMASE"/>
    <property type="match status" value="1"/>
</dbReference>
<dbReference type="Pfam" id="PF01177">
    <property type="entry name" value="Asp_Glu_race"/>
    <property type="match status" value="1"/>
</dbReference>
<dbReference type="SUPFAM" id="SSF53681">
    <property type="entry name" value="Aspartate/glutamate racemase"/>
    <property type="match status" value="2"/>
</dbReference>
<dbReference type="PROSITE" id="PS00923">
    <property type="entry name" value="ASP_GLU_RACEMASE_1"/>
    <property type="match status" value="1"/>
</dbReference>
<dbReference type="PROSITE" id="PS00924">
    <property type="entry name" value="ASP_GLU_RACEMASE_2"/>
    <property type="match status" value="1"/>
</dbReference>
<evidence type="ECO:0000255" key="1">
    <source>
        <dbReference type="HAMAP-Rule" id="MF_00258"/>
    </source>
</evidence>
<sequence length="265" mass="28262">MAAESAPVGVFDSGVGGLSVLREIRARLPAESLLYVADNAHVPYGEKSAEYIRERCERIGDFLLERGAKALVLACNTATAAAAAELRERYPQVPLVAMEPAVKPAAAATRNGRVGVLATTGTLKSARFAALLDRFASDVQVFTQPCPGLVERIEAGDLHGARTRALLERLLGPILEQGCDTLILGCTHYPFVKPLLAELIPADIAVIDTGAAVARQLERVLSTRALLASGQAAAPRFWTSALPEEMERILPILWGSQESVGKLDV</sequence>
<name>MURI_PSEP7</name>
<protein>
    <recommendedName>
        <fullName evidence="1">Glutamate racemase</fullName>
        <ecNumber evidence="1">5.1.1.3</ecNumber>
    </recommendedName>
</protein>
<accession>A6VC58</accession>
<keyword id="KW-0133">Cell shape</keyword>
<keyword id="KW-0961">Cell wall biogenesis/degradation</keyword>
<keyword id="KW-0413">Isomerase</keyword>
<keyword id="KW-0573">Peptidoglycan synthesis</keyword>
<gene>
    <name evidence="1" type="primary">murI</name>
    <name type="ordered locus">PSPA7_5311</name>
</gene>
<organism>
    <name type="scientific">Pseudomonas paraeruginosa (strain DSM 24068 / PA7)</name>
    <name type="common">Pseudomonas aeruginosa (strain PA7)</name>
    <dbReference type="NCBI Taxonomy" id="381754"/>
    <lineage>
        <taxon>Bacteria</taxon>
        <taxon>Pseudomonadati</taxon>
        <taxon>Pseudomonadota</taxon>
        <taxon>Gammaproteobacteria</taxon>
        <taxon>Pseudomonadales</taxon>
        <taxon>Pseudomonadaceae</taxon>
        <taxon>Pseudomonas</taxon>
        <taxon>Pseudomonas paraeruginosa</taxon>
    </lineage>
</organism>
<reference key="1">
    <citation type="submission" date="2007-06" db="EMBL/GenBank/DDBJ databases">
        <authorList>
            <person name="Dodson R.J."/>
            <person name="Harkins D."/>
            <person name="Paulsen I.T."/>
        </authorList>
    </citation>
    <scope>NUCLEOTIDE SEQUENCE [LARGE SCALE GENOMIC DNA]</scope>
    <source>
        <strain>DSM 24068 / PA7</strain>
    </source>
</reference>
<comment type="function">
    <text evidence="1">Provides the (R)-glutamate required for cell wall biosynthesis.</text>
</comment>
<comment type="catalytic activity">
    <reaction evidence="1">
        <text>L-glutamate = D-glutamate</text>
        <dbReference type="Rhea" id="RHEA:12813"/>
        <dbReference type="ChEBI" id="CHEBI:29985"/>
        <dbReference type="ChEBI" id="CHEBI:29986"/>
        <dbReference type="EC" id="5.1.1.3"/>
    </reaction>
</comment>
<comment type="pathway">
    <text evidence="1">Cell wall biogenesis; peptidoglycan biosynthesis.</text>
</comment>
<comment type="similarity">
    <text evidence="1">Belongs to the aspartate/glutamate racemases family.</text>
</comment>